<proteinExistence type="evidence at transcript level"/>
<name>UNK_CANLF</name>
<dbReference type="EMBL" id="AY422569">
    <property type="protein sequence ID" value="AAR32135.1"/>
    <property type="molecule type" value="mRNA"/>
</dbReference>
<dbReference type="RefSeq" id="NP_001003390.1">
    <property type="nucleotide sequence ID" value="NM_001003390.1"/>
</dbReference>
<dbReference type="SMR" id="Q6EE22"/>
<dbReference type="FunCoup" id="Q6EE22">
    <property type="interactions" value="2516"/>
</dbReference>
<dbReference type="STRING" id="9615.ENSCAFP00000007347"/>
<dbReference type="PaxDb" id="9612-ENSCAFP00000007347"/>
<dbReference type="GeneID" id="444855"/>
<dbReference type="KEGG" id="cfa:444855"/>
<dbReference type="CTD" id="85451"/>
<dbReference type="eggNOG" id="KOG1100">
    <property type="taxonomic scope" value="Eukaryota"/>
</dbReference>
<dbReference type="eggNOG" id="KOG1595">
    <property type="taxonomic scope" value="Eukaryota"/>
</dbReference>
<dbReference type="InParanoid" id="Q6EE22"/>
<dbReference type="OrthoDB" id="20534at2759"/>
<dbReference type="Proteomes" id="UP000002254">
    <property type="component" value="Unplaced"/>
</dbReference>
<dbReference type="Proteomes" id="UP000694429">
    <property type="component" value="Unplaced"/>
</dbReference>
<dbReference type="Proteomes" id="UP000694542">
    <property type="component" value="Unplaced"/>
</dbReference>
<dbReference type="Proteomes" id="UP000805418">
    <property type="component" value="Unplaced"/>
</dbReference>
<dbReference type="GO" id="GO:0005737">
    <property type="term" value="C:cytoplasm"/>
    <property type="evidence" value="ECO:0007669"/>
    <property type="project" value="UniProtKB-SubCell"/>
</dbReference>
<dbReference type="GO" id="GO:1990715">
    <property type="term" value="F:mRNA CDS binding"/>
    <property type="evidence" value="ECO:0000318"/>
    <property type="project" value="GO_Central"/>
</dbReference>
<dbReference type="GO" id="GO:0008270">
    <property type="term" value="F:zinc ion binding"/>
    <property type="evidence" value="ECO:0007669"/>
    <property type="project" value="UniProtKB-KW"/>
</dbReference>
<dbReference type="GO" id="GO:0048667">
    <property type="term" value="P:cell morphogenesis involved in neuron differentiation"/>
    <property type="evidence" value="ECO:0000250"/>
    <property type="project" value="UniProtKB"/>
</dbReference>
<dbReference type="GO" id="GO:0006417">
    <property type="term" value="P:regulation of translation"/>
    <property type="evidence" value="ECO:0007669"/>
    <property type="project" value="UniProtKB-KW"/>
</dbReference>
<dbReference type="CDD" id="cd16771">
    <property type="entry name" value="RING-HC_UNK"/>
    <property type="match status" value="1"/>
</dbReference>
<dbReference type="Gene3D" id="4.10.1000.10">
    <property type="entry name" value="Zinc finger, CCCH-type"/>
    <property type="match status" value="2"/>
</dbReference>
<dbReference type="InterPro" id="IPR045234">
    <property type="entry name" value="Unkempt-like"/>
</dbReference>
<dbReference type="InterPro" id="IPR040594">
    <property type="entry name" value="Unkempt_Znf"/>
</dbReference>
<dbReference type="InterPro" id="IPR000571">
    <property type="entry name" value="Znf_CCCH"/>
</dbReference>
<dbReference type="InterPro" id="IPR036855">
    <property type="entry name" value="Znf_CCCH_sf"/>
</dbReference>
<dbReference type="PANTHER" id="PTHR14493:SF36">
    <property type="entry name" value="RING FINGER PROTEIN UNKEMPT HOMOLOG"/>
    <property type="match status" value="1"/>
</dbReference>
<dbReference type="PANTHER" id="PTHR14493">
    <property type="entry name" value="UNKEMPT FAMILY MEMBER"/>
    <property type="match status" value="1"/>
</dbReference>
<dbReference type="Pfam" id="PF00642">
    <property type="entry name" value="zf-CCCH"/>
    <property type="match status" value="1"/>
</dbReference>
<dbReference type="Pfam" id="PF23261">
    <property type="entry name" value="zf-CCCH_11"/>
    <property type="match status" value="1"/>
</dbReference>
<dbReference type="Pfam" id="PF25427">
    <property type="entry name" value="zf-CCCH_UNK"/>
    <property type="match status" value="1"/>
</dbReference>
<dbReference type="Pfam" id="PF23035">
    <property type="entry name" value="zf-CCCH_UNK-like_4th"/>
    <property type="match status" value="1"/>
</dbReference>
<dbReference type="Pfam" id="PF18384">
    <property type="entry name" value="zf_CCCH_5"/>
    <property type="match status" value="1"/>
</dbReference>
<dbReference type="SMART" id="SM00356">
    <property type="entry name" value="ZnF_C3H1"/>
    <property type="match status" value="5"/>
</dbReference>
<dbReference type="SUPFAM" id="SSF90229">
    <property type="entry name" value="CCCH zinc finger"/>
    <property type="match status" value="1"/>
</dbReference>
<dbReference type="PROSITE" id="PS50103">
    <property type="entry name" value="ZF_C3H1"/>
    <property type="match status" value="5"/>
</dbReference>
<comment type="function">
    <text evidence="1">Sequence-specific RNA-binding protein which plays an important role in the establishment and maintenance of the early morphology of cortical neurons during embryonic development. Acts as a translation repressor and controls a translationally regulated cell morphology program to ensure proper structuring of the nervous system. Translational control depends on recognition of its binding element within target mRNAs which consists of a mandatory UAG trimer upstream of a U/A-rich motif. Associated with polysomes.</text>
</comment>
<comment type="subcellular location">
    <subcellularLocation>
        <location evidence="1">Cytoplasm</location>
    </subcellularLocation>
</comment>
<comment type="similarity">
    <text evidence="5">Belongs to the unkempt family.</text>
</comment>
<gene>
    <name type="primary">UNK</name>
    <name type="synonym">KIAA1753</name>
    <name type="synonym">ZC3H5</name>
</gene>
<reference key="1">
    <citation type="journal article" date="2004" name="Anim. Genet.">
        <title>Cloning and mapping of canine KIAA1753.</title>
        <authorList>
            <person name="Casse C."/>
            <person name="Acland G.M."/>
            <person name="Aguirre G.D."/>
        </authorList>
    </citation>
    <scope>NUCLEOTIDE SEQUENCE [MRNA]</scope>
</reference>
<evidence type="ECO:0000250" key="1">
    <source>
        <dbReference type="UniProtKB" id="Q9C0B0"/>
    </source>
</evidence>
<evidence type="ECO:0000255" key="2"/>
<evidence type="ECO:0000255" key="3">
    <source>
        <dbReference type="PROSITE-ProRule" id="PRU00723"/>
    </source>
</evidence>
<evidence type="ECO:0000256" key="4">
    <source>
        <dbReference type="SAM" id="MobiDB-lite"/>
    </source>
</evidence>
<evidence type="ECO:0000305" key="5"/>
<organism>
    <name type="scientific">Canis lupus familiaris</name>
    <name type="common">Dog</name>
    <name type="synonym">Canis familiaris</name>
    <dbReference type="NCBI Taxonomy" id="9615"/>
    <lineage>
        <taxon>Eukaryota</taxon>
        <taxon>Metazoa</taxon>
        <taxon>Chordata</taxon>
        <taxon>Craniata</taxon>
        <taxon>Vertebrata</taxon>
        <taxon>Euteleostomi</taxon>
        <taxon>Mammalia</taxon>
        <taxon>Eutheria</taxon>
        <taxon>Laurasiatheria</taxon>
        <taxon>Carnivora</taxon>
        <taxon>Caniformia</taxon>
        <taxon>Canidae</taxon>
        <taxon>Canis</taxon>
    </lineage>
</organism>
<sequence length="810" mass="88250">MSKGPGPGGSAASSAPPAATAQVLQAQPEKPQHYTYLKEFRTEQCPLFVQHKCTQHRPYTCFHWHFVNQRRRRSIRRRDGTFNYSPDVYCTKYDEATGLCPEGDECPFLHRTTGDTERRYHLRYYKTGICIHETDSKGNCTKNGLHCAFAHGPHDLRSPVYDIRELQAMEALQNGQTTVEGSIEGQTAGAASHAMIEKILSEEPRWQETAYVLGNYKTEPCKKPPRLCRQGYACPYYHNSKDRRRSPRKHKYRSSPCPNVKHGDEWGDPGKCENGDACQYCHTRTEQQFHPEIYKSTKCNDMQQSGSCPRGPFCAFAHVEQPPLSDDLQPSSTVSSPTQPGPVLYMPSAAGDSVPVSPSSPHAPDLSTLLCRNSNLGSPSNLCGSPPGSIRKPPNLEGIVFPGESGLAPGSYKKAPGFEREDQVGAEYLKNFKCQAKLKPHSLEPRSQEQPLLQPKQDMLGILPVGSPLTSSISSSITSSLAATPPSPAGTSSVPGMNANALPFYPTSDTVESVIESALDDLDLNEFGVAALEKTFDNSTVPHPGSITIGGSLLQSSAPVNIPGSLGSSASFHSASPSPPVSLSSHFLQQPQGHLSQSENTFLGTSASHGSLGLNGMNSSIWEHFASGSFSPGTFPAFLSGPGAAELARLRQELEEANGTIKQWEESWKQAKQACDAWKKEAEEAGERASAAGAECELAREQRDALEGQVKKLQEELERLHSGPDPQALPTFSDLEALSLSTLYSLQKQLRAHLEQVDKAVFHMQSVKCLKCQEQNRAVLPCQHAVLCELCAEGSECPVCQPSRAHTLQS</sequence>
<protein>
    <recommendedName>
        <fullName>RING finger protein unkempt homolog</fullName>
    </recommendedName>
    <alternativeName>
        <fullName>Zinc finger CCCH domain-containing protein 5</fullName>
    </alternativeName>
</protein>
<keyword id="KW-0175">Coiled coil</keyword>
<keyword id="KW-0963">Cytoplasm</keyword>
<keyword id="KW-0479">Metal-binding</keyword>
<keyword id="KW-0597">Phosphoprotein</keyword>
<keyword id="KW-1185">Reference proteome</keyword>
<keyword id="KW-0677">Repeat</keyword>
<keyword id="KW-0678">Repressor</keyword>
<keyword id="KW-0694">RNA-binding</keyword>
<keyword id="KW-0810">Translation regulation</keyword>
<keyword id="KW-0862">Zinc</keyword>
<keyword id="KW-0863">Zinc-finger</keyword>
<accession>Q6EE22</accession>
<feature type="chain" id="PRO_0000213898" description="RING finger protein unkempt homolog">
    <location>
        <begin position="1"/>
        <end position="810"/>
    </location>
</feature>
<feature type="zinc finger region" description="C3H1-type 1" evidence="3">
    <location>
        <begin position="84"/>
        <end position="113"/>
    </location>
</feature>
<feature type="zinc finger region" description="C3H1-type 2" evidence="3">
    <location>
        <begin position="124"/>
        <end position="154"/>
    </location>
</feature>
<feature type="zinc finger region" description="C3H1-type 3" evidence="3">
    <location>
        <begin position="215"/>
        <end position="241"/>
    </location>
</feature>
<feature type="zinc finger region" description="C3H1-type 4" evidence="3">
    <location>
        <begin position="251"/>
        <end position="285"/>
    </location>
</feature>
<feature type="zinc finger region" description="C3H1-type 5" evidence="3">
    <location>
        <begin position="293"/>
        <end position="321"/>
    </location>
</feature>
<feature type="zinc finger region" description="RING-type; degenerate">
    <location>
        <begin position="766"/>
        <end position="801"/>
    </location>
</feature>
<feature type="region of interest" description="Disordered" evidence="4">
    <location>
        <begin position="1"/>
        <end position="24"/>
    </location>
</feature>
<feature type="region of interest" description="Disordered" evidence="4">
    <location>
        <begin position="239"/>
        <end position="265"/>
    </location>
</feature>
<feature type="region of interest" description="Disordered" evidence="4">
    <location>
        <begin position="324"/>
        <end position="343"/>
    </location>
</feature>
<feature type="region of interest" description="Disordered" evidence="4">
    <location>
        <begin position="569"/>
        <end position="602"/>
    </location>
</feature>
<feature type="coiled-coil region" evidence="2">
    <location>
        <begin position="643"/>
        <end position="723"/>
    </location>
</feature>
<feature type="compositionally biased region" description="Low complexity" evidence="4">
    <location>
        <begin position="10"/>
        <end position="19"/>
    </location>
</feature>
<feature type="compositionally biased region" description="Basic residues" evidence="4">
    <location>
        <begin position="241"/>
        <end position="253"/>
    </location>
</feature>
<feature type="compositionally biased region" description="Low complexity" evidence="4">
    <location>
        <begin position="329"/>
        <end position="343"/>
    </location>
</feature>
<feature type="compositionally biased region" description="Low complexity" evidence="4">
    <location>
        <begin position="569"/>
        <end position="585"/>
    </location>
</feature>
<feature type="compositionally biased region" description="Polar residues" evidence="4">
    <location>
        <begin position="586"/>
        <end position="602"/>
    </location>
</feature>
<feature type="modified residue" description="Phosphoserine" evidence="1">
    <location>
        <position position="240"/>
    </location>
</feature>
<feature type="modified residue" description="Phosphoserine" evidence="1">
    <location>
        <position position="374"/>
    </location>
</feature>
<feature type="modified residue" description="Phosphoserine" evidence="1">
    <location>
        <position position="378"/>
    </location>
</feature>
<feature type="modified residue" description="Phosphoserine" evidence="1">
    <location>
        <position position="385"/>
    </location>
</feature>
<feature type="modified residue" description="Phosphoserine" evidence="1">
    <location>
        <position position="631"/>
    </location>
</feature>